<proteinExistence type="inferred from homology"/>
<feature type="chain" id="PRO_1000049926" description="DNA-directed RNA polymerase subunit Rpo1C">
    <location>
        <begin position="1"/>
        <end position="386"/>
    </location>
</feature>
<reference key="1">
    <citation type="submission" date="2007-03" db="EMBL/GenBank/DDBJ databases">
        <title>Complete sequence of chromosome of Methanococcus maripaludis C5.</title>
        <authorList>
            <consortium name="US DOE Joint Genome Institute"/>
            <person name="Copeland A."/>
            <person name="Lucas S."/>
            <person name="Lapidus A."/>
            <person name="Barry K."/>
            <person name="Glavina del Rio T."/>
            <person name="Dalin E."/>
            <person name="Tice H."/>
            <person name="Pitluck S."/>
            <person name="Chertkov O."/>
            <person name="Brettin T."/>
            <person name="Bruce D."/>
            <person name="Han C."/>
            <person name="Detter J.C."/>
            <person name="Schmutz J."/>
            <person name="Larimer F."/>
            <person name="Land M."/>
            <person name="Hauser L."/>
            <person name="Kyrpides N."/>
            <person name="Mikhailova N."/>
            <person name="Sieprawska-Lupa M."/>
            <person name="Whitman W.B."/>
            <person name="Richardson P."/>
        </authorList>
    </citation>
    <scope>NUCLEOTIDE SEQUENCE [LARGE SCALE GENOMIC DNA]</scope>
    <source>
        <strain>C5 / ATCC BAA-1333</strain>
    </source>
</reference>
<protein>
    <recommendedName>
        <fullName evidence="1">DNA-directed RNA polymerase subunit Rpo1C</fullName>
        <ecNumber evidence="1">2.7.7.6</ecNumber>
    </recommendedName>
    <alternativeName>
        <fullName evidence="1">DNA-directed RNA polymerase subunit A''</fullName>
    </alternativeName>
</protein>
<organism>
    <name type="scientific">Methanococcus maripaludis (strain C5 / ATCC BAA-1333)</name>
    <dbReference type="NCBI Taxonomy" id="402880"/>
    <lineage>
        <taxon>Archaea</taxon>
        <taxon>Methanobacteriati</taxon>
        <taxon>Methanobacteriota</taxon>
        <taxon>Methanomada group</taxon>
        <taxon>Methanococci</taxon>
        <taxon>Methanococcales</taxon>
        <taxon>Methanococcaceae</taxon>
        <taxon>Methanococcus</taxon>
    </lineage>
</organism>
<dbReference type="EC" id="2.7.7.6" evidence="1"/>
<dbReference type="EMBL" id="CP000609">
    <property type="protein sequence ID" value="ABO34530.1"/>
    <property type="molecule type" value="Genomic_DNA"/>
</dbReference>
<dbReference type="RefSeq" id="WP_011867988.1">
    <property type="nucleotide sequence ID" value="NC_009135.1"/>
</dbReference>
<dbReference type="SMR" id="A4FWF5"/>
<dbReference type="STRING" id="402880.MmarC5_0214"/>
<dbReference type="GeneID" id="4928483"/>
<dbReference type="KEGG" id="mmq:MmarC5_0214"/>
<dbReference type="eggNOG" id="arCOG04256">
    <property type="taxonomic scope" value="Archaea"/>
</dbReference>
<dbReference type="HOGENOM" id="CLU_037097_1_0_2"/>
<dbReference type="OrthoDB" id="372142at2157"/>
<dbReference type="Proteomes" id="UP000000253">
    <property type="component" value="Chromosome"/>
</dbReference>
<dbReference type="GO" id="GO:0005737">
    <property type="term" value="C:cytoplasm"/>
    <property type="evidence" value="ECO:0007669"/>
    <property type="project" value="UniProtKB-SubCell"/>
</dbReference>
<dbReference type="GO" id="GO:0000428">
    <property type="term" value="C:DNA-directed RNA polymerase complex"/>
    <property type="evidence" value="ECO:0007669"/>
    <property type="project" value="UniProtKB-KW"/>
</dbReference>
<dbReference type="GO" id="GO:0003677">
    <property type="term" value="F:DNA binding"/>
    <property type="evidence" value="ECO:0007669"/>
    <property type="project" value="UniProtKB-UniRule"/>
</dbReference>
<dbReference type="GO" id="GO:0003899">
    <property type="term" value="F:DNA-directed RNA polymerase activity"/>
    <property type="evidence" value="ECO:0007669"/>
    <property type="project" value="UniProtKB-UniRule"/>
</dbReference>
<dbReference type="GO" id="GO:0006351">
    <property type="term" value="P:DNA-templated transcription"/>
    <property type="evidence" value="ECO:0007669"/>
    <property type="project" value="UniProtKB-UniRule"/>
</dbReference>
<dbReference type="CDD" id="cd06528">
    <property type="entry name" value="RNAP_A"/>
    <property type="match status" value="1"/>
</dbReference>
<dbReference type="Gene3D" id="1.10.150.390">
    <property type="match status" value="1"/>
</dbReference>
<dbReference type="HAMAP" id="MF_00411">
    <property type="entry name" value="RNApol_arch_Rpo1C"/>
    <property type="match status" value="1"/>
</dbReference>
<dbReference type="InterPro" id="IPR045867">
    <property type="entry name" value="DNA-dir_RpoC_beta_prime"/>
</dbReference>
<dbReference type="InterPro" id="IPR007081">
    <property type="entry name" value="RNA_pol_Rpb1_5"/>
</dbReference>
<dbReference type="InterPro" id="IPR012757">
    <property type="entry name" value="RPO1C"/>
</dbReference>
<dbReference type="NCBIfam" id="TIGR02389">
    <property type="entry name" value="RNA_pol_rpoA2"/>
    <property type="match status" value="1"/>
</dbReference>
<dbReference type="PANTHER" id="PTHR19376">
    <property type="entry name" value="DNA-DIRECTED RNA POLYMERASE"/>
    <property type="match status" value="1"/>
</dbReference>
<dbReference type="PANTHER" id="PTHR19376:SF32">
    <property type="entry name" value="DNA-DIRECTED RNA POLYMERASE III SUBUNIT RPC1"/>
    <property type="match status" value="1"/>
</dbReference>
<dbReference type="Pfam" id="PF04998">
    <property type="entry name" value="RNA_pol_Rpb1_5"/>
    <property type="match status" value="1"/>
</dbReference>
<dbReference type="SUPFAM" id="SSF64484">
    <property type="entry name" value="beta and beta-prime subunits of DNA dependent RNA-polymerase"/>
    <property type="match status" value="1"/>
</dbReference>
<name>RPO1C_METM5</name>
<sequence>MQMADLEKKLENSVLPPLLKRELSEKILKDGLSEEYLVDEIISETTRAYERTLVEPGEAVGVVAAQSIGEPGTQMTMRTFHYAGVAELNVTLGLPRMIEIVDARKEPSTPTMTIYLNDEFKGDREKASMVAKNIESTNVESVSEDISVDLVNECITIILNSQQLESRGLTVPDVIEAIKSKMKLKIDDHENVLNLKIKTPSLKALRKRLPKVRAIHLKGVQNIKRVIIRKEVDEYILYSEGSNIKEVFDIEGVDTTKTTTNNIVEIQDVLGIEAARNAIIYEMDATLGNQGLTVDKRHLMMVADLMCTDGVVKPIGRHGIGGEKASVLARAAFEETVKHLYSASMRGYVDELGGVVENIIVGKPIAMGTGCIDICIDKTYEEGKEL</sequence>
<comment type="function">
    <text evidence="1">DNA-dependent RNA polymerase (RNAP) catalyzes the transcription of DNA into RNA using the four ribonucleoside triphosphates as substrates. Forms part of the jaw domain.</text>
</comment>
<comment type="catalytic activity">
    <reaction evidence="1">
        <text>RNA(n) + a ribonucleoside 5'-triphosphate = RNA(n+1) + diphosphate</text>
        <dbReference type="Rhea" id="RHEA:21248"/>
        <dbReference type="Rhea" id="RHEA-COMP:14527"/>
        <dbReference type="Rhea" id="RHEA-COMP:17342"/>
        <dbReference type="ChEBI" id="CHEBI:33019"/>
        <dbReference type="ChEBI" id="CHEBI:61557"/>
        <dbReference type="ChEBI" id="CHEBI:140395"/>
        <dbReference type="EC" id="2.7.7.6"/>
    </reaction>
</comment>
<comment type="subunit">
    <text evidence="1">Part of the RNA polymerase complex.</text>
</comment>
<comment type="subcellular location">
    <subcellularLocation>
        <location evidence="1">Cytoplasm</location>
    </subcellularLocation>
</comment>
<comment type="similarity">
    <text evidence="1">Belongs to the RNA polymerase beta' chain family.</text>
</comment>
<gene>
    <name evidence="1" type="primary">rpo1C</name>
    <name evidence="1" type="synonym">rpoA2</name>
    <name type="ordered locus">MmarC5_0214</name>
</gene>
<evidence type="ECO:0000255" key="1">
    <source>
        <dbReference type="HAMAP-Rule" id="MF_00411"/>
    </source>
</evidence>
<keyword id="KW-0963">Cytoplasm</keyword>
<keyword id="KW-0238">DNA-binding</keyword>
<keyword id="KW-0240">DNA-directed RNA polymerase</keyword>
<keyword id="KW-0548">Nucleotidyltransferase</keyword>
<keyword id="KW-0804">Transcription</keyword>
<keyword id="KW-0808">Transferase</keyword>
<accession>A4FWF5</accession>